<name>PIMT_METMA</name>
<reference key="1">
    <citation type="journal article" date="2002" name="J. Mol. Microbiol. Biotechnol.">
        <title>The genome of Methanosarcina mazei: evidence for lateral gene transfer between Bacteria and Archaea.</title>
        <authorList>
            <person name="Deppenmeier U."/>
            <person name="Johann A."/>
            <person name="Hartsch T."/>
            <person name="Merkl R."/>
            <person name="Schmitz R.A."/>
            <person name="Martinez-Arias R."/>
            <person name="Henne A."/>
            <person name="Wiezer A."/>
            <person name="Baeumer S."/>
            <person name="Jacobi C."/>
            <person name="Brueggemann H."/>
            <person name="Lienard T."/>
            <person name="Christmann A."/>
            <person name="Boemecke M."/>
            <person name="Steckel S."/>
            <person name="Bhattacharyya A."/>
            <person name="Lykidis A."/>
            <person name="Overbeek R."/>
            <person name="Klenk H.-P."/>
            <person name="Gunsalus R.P."/>
            <person name="Fritz H.-J."/>
            <person name="Gottschalk G."/>
        </authorList>
    </citation>
    <scope>NUCLEOTIDE SEQUENCE [LARGE SCALE GENOMIC DNA]</scope>
    <source>
        <strain>ATCC BAA-159 / DSM 3647 / Goe1 / Go1 / JCM 11833 / OCM 88</strain>
    </source>
</reference>
<organism>
    <name type="scientific">Methanosarcina mazei (strain ATCC BAA-159 / DSM 3647 / Goe1 / Go1 / JCM 11833 / OCM 88)</name>
    <name type="common">Methanosarcina frisia</name>
    <dbReference type="NCBI Taxonomy" id="192952"/>
    <lineage>
        <taxon>Archaea</taxon>
        <taxon>Methanobacteriati</taxon>
        <taxon>Methanobacteriota</taxon>
        <taxon>Stenosarchaea group</taxon>
        <taxon>Methanomicrobia</taxon>
        <taxon>Methanosarcinales</taxon>
        <taxon>Methanosarcinaceae</taxon>
        <taxon>Methanosarcina</taxon>
    </lineage>
</organism>
<sequence>MPERRGIVLVNAVSEKDLGEDKRKREKEKECEKLRKLLVEGLEGFVIDEKVLQAMLRVPRHRFVPEYEQRAAYVDMPLEIGHGQTISAPHMVAMMCEILELAEGHKVLEIGAGSGYNAAVMSELVGKTGHIYTVERVEPLANFAKKNLKEAGYKNVTVLLENGSMGYPGYAPYDRIAVTCAAPNIPETLLEQLKPGGIMVIPVGSYSQELIRVKKDSTGKIYRKKKGDVIFVPMIGKHGFRRI</sequence>
<feature type="chain" id="PRO_0000111918" description="Protein-L-isoaspartate O-methyltransferase">
    <location>
        <begin position="1"/>
        <end position="243"/>
    </location>
</feature>
<feature type="active site" evidence="1">
    <location>
        <position position="87"/>
    </location>
</feature>
<keyword id="KW-0963">Cytoplasm</keyword>
<keyword id="KW-0489">Methyltransferase</keyword>
<keyword id="KW-0949">S-adenosyl-L-methionine</keyword>
<keyword id="KW-0808">Transferase</keyword>
<gene>
    <name evidence="1" type="primary">pcm</name>
    <name type="ordered locus">MM_1706</name>
</gene>
<proteinExistence type="inferred from homology"/>
<comment type="function">
    <text evidence="1">Catalyzes the methyl esterification of L-isoaspartyl residues in peptides and proteins that result from spontaneous decomposition of normal L-aspartyl and L-asparaginyl residues. It plays a role in the repair and/or degradation of damaged proteins.</text>
</comment>
<comment type="catalytic activity">
    <reaction evidence="1">
        <text>[protein]-L-isoaspartate + S-adenosyl-L-methionine = [protein]-L-isoaspartate alpha-methyl ester + S-adenosyl-L-homocysteine</text>
        <dbReference type="Rhea" id="RHEA:12705"/>
        <dbReference type="Rhea" id="RHEA-COMP:12143"/>
        <dbReference type="Rhea" id="RHEA-COMP:12144"/>
        <dbReference type="ChEBI" id="CHEBI:57856"/>
        <dbReference type="ChEBI" id="CHEBI:59789"/>
        <dbReference type="ChEBI" id="CHEBI:90596"/>
        <dbReference type="ChEBI" id="CHEBI:90598"/>
        <dbReference type="EC" id="2.1.1.77"/>
    </reaction>
</comment>
<comment type="subcellular location">
    <subcellularLocation>
        <location evidence="1">Cytoplasm</location>
    </subcellularLocation>
</comment>
<comment type="similarity">
    <text evidence="1">Belongs to the methyltransferase superfamily. L-isoaspartyl/D-aspartyl protein methyltransferase family.</text>
</comment>
<dbReference type="EC" id="2.1.1.77" evidence="1"/>
<dbReference type="EMBL" id="AE008384">
    <property type="protein sequence ID" value="AAM31402.1"/>
    <property type="molecule type" value="Genomic_DNA"/>
</dbReference>
<dbReference type="RefSeq" id="WP_011033648.1">
    <property type="nucleotide sequence ID" value="NC_003901.1"/>
</dbReference>
<dbReference type="SMR" id="Q8PW90"/>
<dbReference type="KEGG" id="mma:MM_1706"/>
<dbReference type="PATRIC" id="fig|192952.21.peg.1980"/>
<dbReference type="eggNOG" id="arCOG00976">
    <property type="taxonomic scope" value="Archaea"/>
</dbReference>
<dbReference type="HOGENOM" id="CLU_055432_2_0_2"/>
<dbReference type="Proteomes" id="UP000000595">
    <property type="component" value="Chromosome"/>
</dbReference>
<dbReference type="GO" id="GO:0005737">
    <property type="term" value="C:cytoplasm"/>
    <property type="evidence" value="ECO:0007669"/>
    <property type="project" value="UniProtKB-SubCell"/>
</dbReference>
<dbReference type="GO" id="GO:0004719">
    <property type="term" value="F:protein-L-isoaspartate (D-aspartate) O-methyltransferase activity"/>
    <property type="evidence" value="ECO:0007669"/>
    <property type="project" value="UniProtKB-UniRule"/>
</dbReference>
<dbReference type="GO" id="GO:0032259">
    <property type="term" value="P:methylation"/>
    <property type="evidence" value="ECO:0007669"/>
    <property type="project" value="UniProtKB-KW"/>
</dbReference>
<dbReference type="GO" id="GO:0036211">
    <property type="term" value="P:protein modification process"/>
    <property type="evidence" value="ECO:0007669"/>
    <property type="project" value="UniProtKB-UniRule"/>
</dbReference>
<dbReference type="GO" id="GO:0030091">
    <property type="term" value="P:protein repair"/>
    <property type="evidence" value="ECO:0007669"/>
    <property type="project" value="UniProtKB-UniRule"/>
</dbReference>
<dbReference type="CDD" id="cd02440">
    <property type="entry name" value="AdoMet_MTases"/>
    <property type="match status" value="1"/>
</dbReference>
<dbReference type="FunFam" id="3.40.50.150:FF:000010">
    <property type="entry name" value="Protein-L-isoaspartate O-methyltransferase"/>
    <property type="match status" value="1"/>
</dbReference>
<dbReference type="Gene3D" id="3.40.50.150">
    <property type="entry name" value="Vaccinia Virus protein VP39"/>
    <property type="match status" value="1"/>
</dbReference>
<dbReference type="HAMAP" id="MF_00090">
    <property type="entry name" value="PIMT"/>
    <property type="match status" value="1"/>
</dbReference>
<dbReference type="InterPro" id="IPR000682">
    <property type="entry name" value="PCMT"/>
</dbReference>
<dbReference type="InterPro" id="IPR029063">
    <property type="entry name" value="SAM-dependent_MTases_sf"/>
</dbReference>
<dbReference type="NCBIfam" id="TIGR00080">
    <property type="entry name" value="pimt"/>
    <property type="match status" value="1"/>
</dbReference>
<dbReference type="NCBIfam" id="NF001453">
    <property type="entry name" value="PRK00312.1"/>
    <property type="match status" value="1"/>
</dbReference>
<dbReference type="NCBIfam" id="NF010549">
    <property type="entry name" value="PRK13942.1"/>
    <property type="match status" value="1"/>
</dbReference>
<dbReference type="PANTHER" id="PTHR11579">
    <property type="entry name" value="PROTEIN-L-ISOASPARTATE O-METHYLTRANSFERASE"/>
    <property type="match status" value="1"/>
</dbReference>
<dbReference type="PANTHER" id="PTHR11579:SF0">
    <property type="entry name" value="PROTEIN-L-ISOASPARTATE(D-ASPARTATE) O-METHYLTRANSFERASE"/>
    <property type="match status" value="1"/>
</dbReference>
<dbReference type="Pfam" id="PF01135">
    <property type="entry name" value="PCMT"/>
    <property type="match status" value="1"/>
</dbReference>
<dbReference type="SUPFAM" id="SSF53335">
    <property type="entry name" value="S-adenosyl-L-methionine-dependent methyltransferases"/>
    <property type="match status" value="1"/>
</dbReference>
<dbReference type="PROSITE" id="PS01279">
    <property type="entry name" value="PCMT"/>
    <property type="match status" value="1"/>
</dbReference>
<accession>Q8PW90</accession>
<evidence type="ECO:0000255" key="1">
    <source>
        <dbReference type="HAMAP-Rule" id="MF_00090"/>
    </source>
</evidence>
<protein>
    <recommendedName>
        <fullName evidence="1">Protein-L-isoaspartate O-methyltransferase</fullName>
        <ecNumber evidence="1">2.1.1.77</ecNumber>
    </recommendedName>
    <alternativeName>
        <fullName evidence="1">L-isoaspartyl protein carboxyl methyltransferase</fullName>
    </alternativeName>
    <alternativeName>
        <fullName evidence="1">Protein L-isoaspartyl methyltransferase</fullName>
    </alternativeName>
    <alternativeName>
        <fullName evidence="1">Protein-beta-aspartate methyltransferase</fullName>
        <shortName evidence="1">PIMT</shortName>
    </alternativeName>
</protein>